<proteinExistence type="evidence at protein level"/>
<dbReference type="GO" id="GO:0005576">
    <property type="term" value="C:extracellular region"/>
    <property type="evidence" value="ECO:0007669"/>
    <property type="project" value="UniProtKB-SubCell"/>
</dbReference>
<dbReference type="GO" id="GO:0035792">
    <property type="term" value="C:host cell postsynaptic membrane"/>
    <property type="evidence" value="ECO:0007669"/>
    <property type="project" value="UniProtKB-KW"/>
</dbReference>
<dbReference type="GO" id="GO:0017080">
    <property type="term" value="F:sodium channel regulator activity"/>
    <property type="evidence" value="ECO:0007669"/>
    <property type="project" value="UniProtKB-KW"/>
</dbReference>
<dbReference type="GO" id="GO:0090729">
    <property type="term" value="F:toxin activity"/>
    <property type="evidence" value="ECO:0007669"/>
    <property type="project" value="UniProtKB-KW"/>
</dbReference>
<feature type="chain" id="PRO_0000459002" description="GAMMA-ctenitoxin-Pb1a" evidence="2">
    <location>
        <begin position="1" status="less than"/>
        <end position="11" status="greater than"/>
    </location>
</feature>
<feature type="unsure residue" description="I or L" evidence="5">
    <location>
        <position position="6"/>
    </location>
</feature>
<feature type="unsure residue" description="I or L" evidence="5">
    <location>
        <position position="10"/>
    </location>
</feature>
<feature type="non-terminal residue" evidence="5">
    <location>
        <position position="1"/>
    </location>
</feature>
<feature type="non-terminal residue" evidence="5">
    <location>
        <position position="11"/>
    </location>
</feature>
<accession>P0DX51</accession>
<name>TX35A_PHOBO</name>
<reference key="1">
    <citation type="journal article" date="2015" name="Toxins">
        <title>Partial characterization of venom from the Colombian spider Phoneutria boliviensis (aranae:ctenidae).</title>
        <authorList>
            <person name="Estrada-Gomez S."/>
            <person name="Munoz L.J."/>
            <person name="Lanchero P."/>
            <person name="Latorre C.S."/>
        </authorList>
    </citation>
    <scope>PROTEIN SEQUENCE</scope>
    <scope>SUBCELLULAR LOCATION</scope>
    <scope>IDENTIFICATION BY MASS SPECTROMETRY</scope>
    <source>
        <tissue>Venom</tissue>
    </source>
</reference>
<evidence type="ECO:0000250" key="1">
    <source>
        <dbReference type="UniProtKB" id="P59367"/>
    </source>
</evidence>
<evidence type="ECO:0000269" key="2">
    <source>
    </source>
</evidence>
<evidence type="ECO:0000303" key="3">
    <source>
    </source>
</evidence>
<evidence type="ECO:0000305" key="4"/>
<evidence type="ECO:0000305" key="5">
    <source>
    </source>
</evidence>
<protein>
    <recommendedName>
        <fullName evidence="4">GAMMA-ctenitoxin-Pb1a</fullName>
        <shortName evidence="4">GAMMA-CNTX-Pb1a</shortName>
    </recommendedName>
    <alternativeName>
        <fullName evidence="3">Ctenitoxin-Pb53</fullName>
    </alternativeName>
</protein>
<organism>
    <name type="scientific">Phoneutria boliviensis</name>
    <name type="common">Brazilian wandering spider</name>
    <dbReference type="NCBI Taxonomy" id="2598454"/>
    <lineage>
        <taxon>Eukaryota</taxon>
        <taxon>Metazoa</taxon>
        <taxon>Ecdysozoa</taxon>
        <taxon>Arthropoda</taxon>
        <taxon>Chelicerata</taxon>
        <taxon>Arachnida</taxon>
        <taxon>Araneae</taxon>
        <taxon>Araneomorphae</taxon>
        <taxon>Entelegynae</taxon>
        <taxon>Lycosoidea</taxon>
        <taxon>Ctenidae</taxon>
        <taxon>Phoneutria</taxon>
    </lineage>
</organism>
<keyword id="KW-0903">Direct protein sequencing</keyword>
<keyword id="KW-1015">Disulfide bond</keyword>
<keyword id="KW-0872">Ion channel impairing toxin</keyword>
<keyword id="KW-1028">Ionotropic glutamate receptor inhibitor</keyword>
<keyword id="KW-0960">Knottin</keyword>
<keyword id="KW-0528">Neurotoxin</keyword>
<keyword id="KW-0629">Postsynaptic neurotoxin</keyword>
<keyword id="KW-0964">Secreted</keyword>
<keyword id="KW-0800">Toxin</keyword>
<keyword id="KW-0738">Voltage-gated sodium channel impairing toxin</keyword>
<comment type="function">
    <text evidence="1">This insecticidal neurotoxin targets two types of channels/receptors. It reversibly inhibits the N-methyl-D-aspartate (NMDA)-subtype of ionotropic glutamate receptor (GRIN). It inhibits glutamate uptake from rat brain synaptosomes, and blocks GRIN in hippocampal slices. It also acts on sodium channels of both insects and mammals. On sodium channel insects, it strongly slows down channel inactivation (EC(50)=212.5 nM) and causes an increase (105%) in peak amplitude (at 1 uM) of B.germanica sodium channel (Nav), whereas it inhibits all mammalien sodium channels tested with the following order of potency: Nav1.3/SCN3A (IC(50)=1.5 uM) &gt; Nav1.6/SCN8A &gt; Nav1.5/SCN5A &gt; Nav1.4/SCN4A &gt;= Nav1.2/SCN2A. In vivo, it is highly toxic to house fly (Musca domestica), cockroach (Periplaneta americana), and cricket (Acheta domesticus). In different rat pain models (induced by PGE2, carrageenan or glutamate), it shows antinociceptive effect that may be related to an inhibitory activity on the glutamatergic system.</text>
</comment>
<comment type="subcellular location">
    <subcellularLocation>
        <location evidence="2">Secreted</location>
    </subcellularLocation>
</comment>
<comment type="tissue specificity">
    <text evidence="5">Expressed by the venom gland.</text>
</comment>
<comment type="domain">
    <text evidence="4">The presence of a 'disulfide through disulfide knot' structurally defines this protein as a knottin.</text>
</comment>
<comment type="PTM">
    <text evidence="1">Contains 5 disulfide bonds.</text>
</comment>
<comment type="similarity">
    <text evidence="4">Belongs to the neurotoxin 03 (Tx2) family. 05 subfamily.</text>
</comment>
<sequence length="11" mass="1265">ESNFKIGMAIR</sequence>